<comment type="function">
    <text evidence="1">Catalyzes the radical-mediated insertion of two sulfur atoms into the C-6 and C-8 positions of the octanoyl moiety bound to the lipoyl domains of lipoate-dependent enzymes, thereby converting the octanoylated domains into lipoylated derivatives.</text>
</comment>
<comment type="catalytic activity">
    <reaction evidence="1">
        <text>[[Fe-S] cluster scaffold protein carrying a second [4Fe-4S](2+) cluster] + N(6)-octanoyl-L-lysyl-[protein] + 2 oxidized [2Fe-2S]-[ferredoxin] + 2 S-adenosyl-L-methionine + 4 H(+) = [[Fe-S] cluster scaffold protein] + N(6)-[(R)-dihydrolipoyl]-L-lysyl-[protein] + 4 Fe(3+) + 2 hydrogen sulfide + 2 5'-deoxyadenosine + 2 L-methionine + 2 reduced [2Fe-2S]-[ferredoxin]</text>
        <dbReference type="Rhea" id="RHEA:16585"/>
        <dbReference type="Rhea" id="RHEA-COMP:9928"/>
        <dbReference type="Rhea" id="RHEA-COMP:10000"/>
        <dbReference type="Rhea" id="RHEA-COMP:10001"/>
        <dbReference type="Rhea" id="RHEA-COMP:10475"/>
        <dbReference type="Rhea" id="RHEA-COMP:14568"/>
        <dbReference type="Rhea" id="RHEA-COMP:14569"/>
        <dbReference type="ChEBI" id="CHEBI:15378"/>
        <dbReference type="ChEBI" id="CHEBI:17319"/>
        <dbReference type="ChEBI" id="CHEBI:29034"/>
        <dbReference type="ChEBI" id="CHEBI:29919"/>
        <dbReference type="ChEBI" id="CHEBI:33722"/>
        <dbReference type="ChEBI" id="CHEBI:33737"/>
        <dbReference type="ChEBI" id="CHEBI:33738"/>
        <dbReference type="ChEBI" id="CHEBI:57844"/>
        <dbReference type="ChEBI" id="CHEBI:59789"/>
        <dbReference type="ChEBI" id="CHEBI:78809"/>
        <dbReference type="ChEBI" id="CHEBI:83100"/>
        <dbReference type="EC" id="2.8.1.8"/>
    </reaction>
</comment>
<comment type="cofactor">
    <cofactor evidence="1">
        <name>[4Fe-4S] cluster</name>
        <dbReference type="ChEBI" id="CHEBI:49883"/>
    </cofactor>
    <text evidence="1">Binds 2 [4Fe-4S] clusters per subunit. One cluster is coordinated with 3 cysteines and an exchangeable S-adenosyl-L-methionine.</text>
</comment>
<comment type="pathway">
    <text evidence="1">Protein modification; protein lipoylation via endogenous pathway; protein N(6)-(lipoyl)lysine from octanoyl-[acyl-carrier-protein]: step 2/2.</text>
</comment>
<comment type="subcellular location">
    <subcellularLocation>
        <location evidence="1">Cytoplasm</location>
    </subcellularLocation>
</comment>
<comment type="similarity">
    <text evidence="1">Belongs to the radical SAM superfamily. Lipoyl synthase family.</text>
</comment>
<evidence type="ECO:0000255" key="1">
    <source>
        <dbReference type="HAMAP-Rule" id="MF_00206"/>
    </source>
</evidence>
<evidence type="ECO:0000255" key="2">
    <source>
        <dbReference type="PROSITE-ProRule" id="PRU01266"/>
    </source>
</evidence>
<proteinExistence type="inferred from homology"/>
<organism>
    <name type="scientific">Escherichia coli O8 (strain IAI1)</name>
    <dbReference type="NCBI Taxonomy" id="585034"/>
    <lineage>
        <taxon>Bacteria</taxon>
        <taxon>Pseudomonadati</taxon>
        <taxon>Pseudomonadota</taxon>
        <taxon>Gammaproteobacteria</taxon>
        <taxon>Enterobacterales</taxon>
        <taxon>Enterobacteriaceae</taxon>
        <taxon>Escherichia</taxon>
    </lineage>
</organism>
<accession>B7M5F5</accession>
<protein>
    <recommendedName>
        <fullName evidence="1">Lipoyl synthase</fullName>
        <ecNumber evidence="1">2.8.1.8</ecNumber>
    </recommendedName>
    <alternativeName>
        <fullName evidence="1">Lip-syn</fullName>
        <shortName evidence="1">LS</shortName>
    </alternativeName>
    <alternativeName>
        <fullName evidence="1">Lipoate synthase</fullName>
    </alternativeName>
    <alternativeName>
        <fullName evidence="1">Lipoic acid synthase</fullName>
    </alternativeName>
    <alternativeName>
        <fullName evidence="1">Sulfur insertion protein LipA</fullName>
    </alternativeName>
</protein>
<keyword id="KW-0004">4Fe-4S</keyword>
<keyword id="KW-0963">Cytoplasm</keyword>
<keyword id="KW-0408">Iron</keyword>
<keyword id="KW-0411">Iron-sulfur</keyword>
<keyword id="KW-0479">Metal-binding</keyword>
<keyword id="KW-0949">S-adenosyl-L-methionine</keyword>
<keyword id="KW-0808">Transferase</keyword>
<reference key="1">
    <citation type="journal article" date="2009" name="PLoS Genet.">
        <title>Organised genome dynamics in the Escherichia coli species results in highly diverse adaptive paths.</title>
        <authorList>
            <person name="Touchon M."/>
            <person name="Hoede C."/>
            <person name="Tenaillon O."/>
            <person name="Barbe V."/>
            <person name="Baeriswyl S."/>
            <person name="Bidet P."/>
            <person name="Bingen E."/>
            <person name="Bonacorsi S."/>
            <person name="Bouchier C."/>
            <person name="Bouvet O."/>
            <person name="Calteau A."/>
            <person name="Chiapello H."/>
            <person name="Clermont O."/>
            <person name="Cruveiller S."/>
            <person name="Danchin A."/>
            <person name="Diard M."/>
            <person name="Dossat C."/>
            <person name="Karoui M.E."/>
            <person name="Frapy E."/>
            <person name="Garry L."/>
            <person name="Ghigo J.M."/>
            <person name="Gilles A.M."/>
            <person name="Johnson J."/>
            <person name="Le Bouguenec C."/>
            <person name="Lescat M."/>
            <person name="Mangenot S."/>
            <person name="Martinez-Jehanne V."/>
            <person name="Matic I."/>
            <person name="Nassif X."/>
            <person name="Oztas S."/>
            <person name="Petit M.A."/>
            <person name="Pichon C."/>
            <person name="Rouy Z."/>
            <person name="Ruf C.S."/>
            <person name="Schneider D."/>
            <person name="Tourret J."/>
            <person name="Vacherie B."/>
            <person name="Vallenet D."/>
            <person name="Medigue C."/>
            <person name="Rocha E.P.C."/>
            <person name="Denamur E."/>
        </authorList>
    </citation>
    <scope>NUCLEOTIDE SEQUENCE [LARGE SCALE GENOMIC DNA]</scope>
    <source>
        <strain>IAI1</strain>
    </source>
</reference>
<gene>
    <name evidence="1" type="primary">lipA</name>
    <name type="ordered locus">ECIAI1_0611</name>
</gene>
<dbReference type="EC" id="2.8.1.8" evidence="1"/>
<dbReference type="EMBL" id="CU928160">
    <property type="protein sequence ID" value="CAQ97481.1"/>
    <property type="molecule type" value="Genomic_DNA"/>
</dbReference>
<dbReference type="RefSeq" id="WP_000042632.1">
    <property type="nucleotide sequence ID" value="NC_011741.1"/>
</dbReference>
<dbReference type="SMR" id="B7M5F5"/>
<dbReference type="GeneID" id="93776854"/>
<dbReference type="KEGG" id="ecr:ECIAI1_0611"/>
<dbReference type="HOGENOM" id="CLU_033144_2_1_6"/>
<dbReference type="UniPathway" id="UPA00538">
    <property type="reaction ID" value="UER00593"/>
</dbReference>
<dbReference type="GO" id="GO:0005737">
    <property type="term" value="C:cytoplasm"/>
    <property type="evidence" value="ECO:0007669"/>
    <property type="project" value="UniProtKB-SubCell"/>
</dbReference>
<dbReference type="GO" id="GO:0051539">
    <property type="term" value="F:4 iron, 4 sulfur cluster binding"/>
    <property type="evidence" value="ECO:0007669"/>
    <property type="project" value="UniProtKB-UniRule"/>
</dbReference>
<dbReference type="GO" id="GO:0016992">
    <property type="term" value="F:lipoate synthase activity"/>
    <property type="evidence" value="ECO:0007669"/>
    <property type="project" value="UniProtKB-UniRule"/>
</dbReference>
<dbReference type="GO" id="GO:0046872">
    <property type="term" value="F:metal ion binding"/>
    <property type="evidence" value="ECO:0007669"/>
    <property type="project" value="UniProtKB-KW"/>
</dbReference>
<dbReference type="CDD" id="cd01335">
    <property type="entry name" value="Radical_SAM"/>
    <property type="match status" value="1"/>
</dbReference>
<dbReference type="FunFam" id="3.20.20.70:FF:000023">
    <property type="entry name" value="Lipoyl synthase"/>
    <property type="match status" value="1"/>
</dbReference>
<dbReference type="Gene3D" id="3.20.20.70">
    <property type="entry name" value="Aldolase class I"/>
    <property type="match status" value="1"/>
</dbReference>
<dbReference type="HAMAP" id="MF_00206">
    <property type="entry name" value="Lipoyl_synth"/>
    <property type="match status" value="1"/>
</dbReference>
<dbReference type="InterPro" id="IPR013785">
    <property type="entry name" value="Aldolase_TIM"/>
</dbReference>
<dbReference type="InterPro" id="IPR006638">
    <property type="entry name" value="Elp3/MiaA/NifB-like_rSAM"/>
</dbReference>
<dbReference type="InterPro" id="IPR031691">
    <property type="entry name" value="LIAS_N"/>
</dbReference>
<dbReference type="InterPro" id="IPR003698">
    <property type="entry name" value="Lipoyl_synth"/>
</dbReference>
<dbReference type="InterPro" id="IPR007197">
    <property type="entry name" value="rSAM"/>
</dbReference>
<dbReference type="NCBIfam" id="TIGR00510">
    <property type="entry name" value="lipA"/>
    <property type="match status" value="1"/>
</dbReference>
<dbReference type="NCBIfam" id="NF004019">
    <property type="entry name" value="PRK05481.1"/>
    <property type="match status" value="1"/>
</dbReference>
<dbReference type="NCBIfam" id="NF009544">
    <property type="entry name" value="PRK12928.1"/>
    <property type="match status" value="1"/>
</dbReference>
<dbReference type="PANTHER" id="PTHR10949">
    <property type="entry name" value="LIPOYL SYNTHASE"/>
    <property type="match status" value="1"/>
</dbReference>
<dbReference type="PANTHER" id="PTHR10949:SF0">
    <property type="entry name" value="LIPOYL SYNTHASE, MITOCHONDRIAL"/>
    <property type="match status" value="1"/>
</dbReference>
<dbReference type="Pfam" id="PF16881">
    <property type="entry name" value="LIAS_N"/>
    <property type="match status" value="1"/>
</dbReference>
<dbReference type="Pfam" id="PF04055">
    <property type="entry name" value="Radical_SAM"/>
    <property type="match status" value="1"/>
</dbReference>
<dbReference type="PIRSF" id="PIRSF005963">
    <property type="entry name" value="Lipoyl_synth"/>
    <property type="match status" value="1"/>
</dbReference>
<dbReference type="SFLD" id="SFLDF00271">
    <property type="entry name" value="lipoyl_synthase"/>
    <property type="match status" value="1"/>
</dbReference>
<dbReference type="SFLD" id="SFLDG01058">
    <property type="entry name" value="lipoyl_synthase_like"/>
    <property type="match status" value="1"/>
</dbReference>
<dbReference type="SMART" id="SM00729">
    <property type="entry name" value="Elp3"/>
    <property type="match status" value="1"/>
</dbReference>
<dbReference type="SUPFAM" id="SSF102114">
    <property type="entry name" value="Radical SAM enzymes"/>
    <property type="match status" value="1"/>
</dbReference>
<dbReference type="PROSITE" id="PS51918">
    <property type="entry name" value="RADICAL_SAM"/>
    <property type="match status" value="1"/>
</dbReference>
<feature type="chain" id="PRO_1000191452" description="Lipoyl synthase">
    <location>
        <begin position="1"/>
        <end position="321"/>
    </location>
</feature>
<feature type="domain" description="Radical SAM core" evidence="2">
    <location>
        <begin position="80"/>
        <end position="297"/>
    </location>
</feature>
<feature type="binding site" evidence="1">
    <location>
        <position position="68"/>
    </location>
    <ligand>
        <name>[4Fe-4S] cluster</name>
        <dbReference type="ChEBI" id="CHEBI:49883"/>
        <label>1</label>
    </ligand>
</feature>
<feature type="binding site" evidence="1">
    <location>
        <position position="73"/>
    </location>
    <ligand>
        <name>[4Fe-4S] cluster</name>
        <dbReference type="ChEBI" id="CHEBI:49883"/>
        <label>1</label>
    </ligand>
</feature>
<feature type="binding site" evidence="1">
    <location>
        <position position="79"/>
    </location>
    <ligand>
        <name>[4Fe-4S] cluster</name>
        <dbReference type="ChEBI" id="CHEBI:49883"/>
        <label>1</label>
    </ligand>
</feature>
<feature type="binding site" evidence="1">
    <location>
        <position position="94"/>
    </location>
    <ligand>
        <name>[4Fe-4S] cluster</name>
        <dbReference type="ChEBI" id="CHEBI:49883"/>
        <label>2</label>
        <note>4Fe-4S-S-AdoMet</note>
    </ligand>
</feature>
<feature type="binding site" evidence="1">
    <location>
        <position position="98"/>
    </location>
    <ligand>
        <name>[4Fe-4S] cluster</name>
        <dbReference type="ChEBI" id="CHEBI:49883"/>
        <label>2</label>
        <note>4Fe-4S-S-AdoMet</note>
    </ligand>
</feature>
<feature type="binding site" evidence="1">
    <location>
        <position position="101"/>
    </location>
    <ligand>
        <name>[4Fe-4S] cluster</name>
        <dbReference type="ChEBI" id="CHEBI:49883"/>
        <label>2</label>
        <note>4Fe-4S-S-AdoMet</note>
    </ligand>
</feature>
<feature type="binding site" evidence="1">
    <location>
        <position position="308"/>
    </location>
    <ligand>
        <name>[4Fe-4S] cluster</name>
        <dbReference type="ChEBI" id="CHEBI:49883"/>
        <label>1</label>
    </ligand>
</feature>
<sequence>MSKPIVMERGVKYRDADKMALIPVKNVATEREALLRKPEWMKIKLPADSTRIQGIKAAMRKNGLHSVCEEASCPNLAECFNHGTATFMILGAICTRRCPFCDVAHGRPVAPDANEPVKLAQTIADMALRYVVITSVDRDDLRDGGAQHFADCITAIREKSPQIKIETLVPDFRGRMDRALDILTATPPDVFNHNLENVPRIYRQVRPGADYNWSLKLLERFKEAHPEIPTKSGLMVGLGETNEEIIEVMRDLRRHGVTMLTLGQYLQPSRHHLPVQRYVSPDEFDEMKAEALAMGFTHAACGPFVRSSYHADLQAKGMEVK</sequence>
<name>LIPA_ECO8A</name>